<accession>Q3BPW7</accession>
<gene>
    <name evidence="1" type="primary">pgk</name>
    <name type="ordered locus">XCV3465</name>
</gene>
<reference key="1">
    <citation type="journal article" date="2005" name="J. Bacteriol.">
        <title>Insights into genome plasticity and pathogenicity of the plant pathogenic Bacterium Xanthomonas campestris pv. vesicatoria revealed by the complete genome sequence.</title>
        <authorList>
            <person name="Thieme F."/>
            <person name="Koebnik R."/>
            <person name="Bekel T."/>
            <person name="Berger C."/>
            <person name="Boch J."/>
            <person name="Buettner D."/>
            <person name="Caldana C."/>
            <person name="Gaigalat L."/>
            <person name="Goesmann A."/>
            <person name="Kay S."/>
            <person name="Kirchner O."/>
            <person name="Lanz C."/>
            <person name="Linke B."/>
            <person name="McHardy A.C."/>
            <person name="Meyer F."/>
            <person name="Mittenhuber G."/>
            <person name="Nies D.H."/>
            <person name="Niesbach-Kloesgen U."/>
            <person name="Patschkowski T."/>
            <person name="Rueckert C."/>
            <person name="Rupp O."/>
            <person name="Schneiker S."/>
            <person name="Schuster S.C."/>
            <person name="Vorhoelter F.J."/>
            <person name="Weber E."/>
            <person name="Puehler A."/>
            <person name="Bonas U."/>
            <person name="Bartels D."/>
            <person name="Kaiser O."/>
        </authorList>
    </citation>
    <scope>NUCLEOTIDE SEQUENCE [LARGE SCALE GENOMIC DNA]</scope>
    <source>
        <strain>85-10</strain>
    </source>
</reference>
<comment type="catalytic activity">
    <reaction evidence="1">
        <text>(2R)-3-phosphoglycerate + ATP = (2R)-3-phospho-glyceroyl phosphate + ADP</text>
        <dbReference type="Rhea" id="RHEA:14801"/>
        <dbReference type="ChEBI" id="CHEBI:30616"/>
        <dbReference type="ChEBI" id="CHEBI:57604"/>
        <dbReference type="ChEBI" id="CHEBI:58272"/>
        <dbReference type="ChEBI" id="CHEBI:456216"/>
        <dbReference type="EC" id="2.7.2.3"/>
    </reaction>
</comment>
<comment type="pathway">
    <text evidence="1">Carbohydrate degradation; glycolysis; pyruvate from D-glyceraldehyde 3-phosphate: step 2/5.</text>
</comment>
<comment type="subunit">
    <text evidence="1">Monomer.</text>
</comment>
<comment type="subcellular location">
    <subcellularLocation>
        <location evidence="1">Cytoplasm</location>
    </subcellularLocation>
</comment>
<comment type="similarity">
    <text evidence="1">Belongs to the phosphoglycerate kinase family.</text>
</comment>
<organism>
    <name type="scientific">Xanthomonas euvesicatoria pv. vesicatoria (strain 85-10)</name>
    <name type="common">Xanthomonas campestris pv. vesicatoria</name>
    <dbReference type="NCBI Taxonomy" id="316273"/>
    <lineage>
        <taxon>Bacteria</taxon>
        <taxon>Pseudomonadati</taxon>
        <taxon>Pseudomonadota</taxon>
        <taxon>Gammaproteobacteria</taxon>
        <taxon>Lysobacterales</taxon>
        <taxon>Lysobacteraceae</taxon>
        <taxon>Xanthomonas</taxon>
    </lineage>
</organism>
<keyword id="KW-0067">ATP-binding</keyword>
<keyword id="KW-0963">Cytoplasm</keyword>
<keyword id="KW-0324">Glycolysis</keyword>
<keyword id="KW-0418">Kinase</keyword>
<keyword id="KW-0547">Nucleotide-binding</keyword>
<keyword id="KW-0808">Transferase</keyword>
<proteinExistence type="inferred from homology"/>
<dbReference type="EC" id="2.7.2.3" evidence="1"/>
<dbReference type="EMBL" id="AM039952">
    <property type="protein sequence ID" value="CAJ25196.1"/>
    <property type="molecule type" value="Genomic_DNA"/>
</dbReference>
<dbReference type="RefSeq" id="WP_011348426.1">
    <property type="nucleotide sequence ID" value="NZ_CP017190.1"/>
</dbReference>
<dbReference type="SMR" id="Q3BPW7"/>
<dbReference type="STRING" id="456327.BJD11_05410"/>
<dbReference type="KEGG" id="xcv:XCV3465"/>
<dbReference type="eggNOG" id="COG0126">
    <property type="taxonomic scope" value="Bacteria"/>
</dbReference>
<dbReference type="HOGENOM" id="CLU_025427_0_2_6"/>
<dbReference type="UniPathway" id="UPA00109">
    <property type="reaction ID" value="UER00185"/>
</dbReference>
<dbReference type="Proteomes" id="UP000007069">
    <property type="component" value="Chromosome"/>
</dbReference>
<dbReference type="GO" id="GO:0005829">
    <property type="term" value="C:cytosol"/>
    <property type="evidence" value="ECO:0007669"/>
    <property type="project" value="TreeGrafter"/>
</dbReference>
<dbReference type="GO" id="GO:0043531">
    <property type="term" value="F:ADP binding"/>
    <property type="evidence" value="ECO:0007669"/>
    <property type="project" value="TreeGrafter"/>
</dbReference>
<dbReference type="GO" id="GO:0005524">
    <property type="term" value="F:ATP binding"/>
    <property type="evidence" value="ECO:0007669"/>
    <property type="project" value="UniProtKB-KW"/>
</dbReference>
<dbReference type="GO" id="GO:0004618">
    <property type="term" value="F:phosphoglycerate kinase activity"/>
    <property type="evidence" value="ECO:0007669"/>
    <property type="project" value="UniProtKB-UniRule"/>
</dbReference>
<dbReference type="GO" id="GO:0006094">
    <property type="term" value="P:gluconeogenesis"/>
    <property type="evidence" value="ECO:0007669"/>
    <property type="project" value="TreeGrafter"/>
</dbReference>
<dbReference type="GO" id="GO:0006096">
    <property type="term" value="P:glycolytic process"/>
    <property type="evidence" value="ECO:0007669"/>
    <property type="project" value="UniProtKB-UniRule"/>
</dbReference>
<dbReference type="FunFam" id="3.40.50.1260:FF:000001">
    <property type="entry name" value="Phosphoglycerate kinase"/>
    <property type="match status" value="1"/>
</dbReference>
<dbReference type="FunFam" id="3.40.50.1260:FF:000002">
    <property type="entry name" value="Phosphoglycerate kinase"/>
    <property type="match status" value="1"/>
</dbReference>
<dbReference type="Gene3D" id="3.40.50.1260">
    <property type="entry name" value="Phosphoglycerate kinase, N-terminal domain"/>
    <property type="match status" value="2"/>
</dbReference>
<dbReference type="HAMAP" id="MF_00145">
    <property type="entry name" value="Phosphoglyc_kinase"/>
    <property type="match status" value="1"/>
</dbReference>
<dbReference type="InterPro" id="IPR001576">
    <property type="entry name" value="Phosphoglycerate_kinase"/>
</dbReference>
<dbReference type="InterPro" id="IPR015911">
    <property type="entry name" value="Phosphoglycerate_kinase_CS"/>
</dbReference>
<dbReference type="InterPro" id="IPR015824">
    <property type="entry name" value="Phosphoglycerate_kinase_N"/>
</dbReference>
<dbReference type="InterPro" id="IPR036043">
    <property type="entry name" value="Phosphoglycerate_kinase_sf"/>
</dbReference>
<dbReference type="PANTHER" id="PTHR11406">
    <property type="entry name" value="PHOSPHOGLYCERATE KINASE"/>
    <property type="match status" value="1"/>
</dbReference>
<dbReference type="PANTHER" id="PTHR11406:SF23">
    <property type="entry name" value="PHOSPHOGLYCERATE KINASE 1, CHLOROPLASTIC-RELATED"/>
    <property type="match status" value="1"/>
</dbReference>
<dbReference type="Pfam" id="PF00162">
    <property type="entry name" value="PGK"/>
    <property type="match status" value="1"/>
</dbReference>
<dbReference type="PIRSF" id="PIRSF000724">
    <property type="entry name" value="Pgk"/>
    <property type="match status" value="1"/>
</dbReference>
<dbReference type="PRINTS" id="PR00477">
    <property type="entry name" value="PHGLYCKINASE"/>
</dbReference>
<dbReference type="SUPFAM" id="SSF53748">
    <property type="entry name" value="Phosphoglycerate kinase"/>
    <property type="match status" value="1"/>
</dbReference>
<dbReference type="PROSITE" id="PS00111">
    <property type="entry name" value="PGLYCERATE_KINASE"/>
    <property type="match status" value="1"/>
</dbReference>
<sequence length="391" mass="40770">MSIVRMTDLDLSGKRVLIRQDLNVPIDNGQITSEQRITASVPTIKLALEKGAAVMVTSHLGRPKEGSWTEEDSLAPVATRLAALLGVDVPLVRDWVDGVDVAPGQVVLLENCRMNVGEGKDDETLARKYAALCDVFVMDAFGTAHRAQASTHGVIRFAPVAAGGPLLMAELDALAKALDNPAKPLLAIVAGSKVSTKLELLSNLVNKVDQLIVGGGIANTFIAAAGHAVGKSLNEPDLIPTANQIVADAKARGAEIPLPTDVVVAKQFLPDAQASVKSLDAVDADDLILDIGPHTAQRYAELIASAGTVVWNGPVGVFEFESFSHGTETLARAIASSKAFSIAGGGDTLAAVDKYDIAQEVTYISTGGGAFLEFLEGKTLPAVAALQARGQ</sequence>
<evidence type="ECO:0000255" key="1">
    <source>
        <dbReference type="HAMAP-Rule" id="MF_00145"/>
    </source>
</evidence>
<name>PGK_XANE5</name>
<protein>
    <recommendedName>
        <fullName evidence="1">Phosphoglycerate kinase</fullName>
        <ecNumber evidence="1">2.7.2.3</ecNumber>
    </recommendedName>
</protein>
<feature type="chain" id="PRO_1000058091" description="Phosphoglycerate kinase">
    <location>
        <begin position="1"/>
        <end position="391"/>
    </location>
</feature>
<feature type="binding site" evidence="1">
    <location>
        <begin position="21"/>
        <end position="23"/>
    </location>
    <ligand>
        <name>substrate</name>
    </ligand>
</feature>
<feature type="binding site" evidence="1">
    <location>
        <position position="36"/>
    </location>
    <ligand>
        <name>substrate</name>
    </ligand>
</feature>
<feature type="binding site" evidence="1">
    <location>
        <begin position="59"/>
        <end position="62"/>
    </location>
    <ligand>
        <name>substrate</name>
    </ligand>
</feature>
<feature type="binding site" evidence="1">
    <location>
        <position position="113"/>
    </location>
    <ligand>
        <name>substrate</name>
    </ligand>
</feature>
<feature type="binding site" evidence="1">
    <location>
        <position position="146"/>
    </location>
    <ligand>
        <name>substrate</name>
    </ligand>
</feature>
<feature type="binding site" evidence="1">
    <location>
        <position position="197"/>
    </location>
    <ligand>
        <name>ATP</name>
        <dbReference type="ChEBI" id="CHEBI:30616"/>
    </ligand>
</feature>
<feature type="binding site" evidence="1">
    <location>
        <position position="319"/>
    </location>
    <ligand>
        <name>ATP</name>
        <dbReference type="ChEBI" id="CHEBI:30616"/>
    </ligand>
</feature>
<feature type="binding site" evidence="1">
    <location>
        <begin position="345"/>
        <end position="348"/>
    </location>
    <ligand>
        <name>ATP</name>
        <dbReference type="ChEBI" id="CHEBI:30616"/>
    </ligand>
</feature>